<dbReference type="EC" id="2.7.4.25" evidence="1"/>
<dbReference type="EMBL" id="CP000086">
    <property type="protein sequence ID" value="ABC38572.1"/>
    <property type="molecule type" value="Genomic_DNA"/>
</dbReference>
<dbReference type="RefSeq" id="WP_009889839.1">
    <property type="nucleotide sequence ID" value="NZ_CP008785.1"/>
</dbReference>
<dbReference type="SMR" id="Q2SY25"/>
<dbReference type="GeneID" id="45121368"/>
<dbReference type="KEGG" id="bte:BTH_I1637"/>
<dbReference type="HOGENOM" id="CLU_079959_2_0_4"/>
<dbReference type="Proteomes" id="UP000001930">
    <property type="component" value="Chromosome I"/>
</dbReference>
<dbReference type="GO" id="GO:0005829">
    <property type="term" value="C:cytosol"/>
    <property type="evidence" value="ECO:0007669"/>
    <property type="project" value="TreeGrafter"/>
</dbReference>
<dbReference type="GO" id="GO:0005524">
    <property type="term" value="F:ATP binding"/>
    <property type="evidence" value="ECO:0007669"/>
    <property type="project" value="UniProtKB-UniRule"/>
</dbReference>
<dbReference type="GO" id="GO:0036430">
    <property type="term" value="F:CMP kinase activity"/>
    <property type="evidence" value="ECO:0007669"/>
    <property type="project" value="RHEA"/>
</dbReference>
<dbReference type="GO" id="GO:0036431">
    <property type="term" value="F:dCMP kinase activity"/>
    <property type="evidence" value="ECO:0007669"/>
    <property type="project" value="RHEA"/>
</dbReference>
<dbReference type="GO" id="GO:0015949">
    <property type="term" value="P:nucleobase-containing small molecule interconversion"/>
    <property type="evidence" value="ECO:0007669"/>
    <property type="project" value="TreeGrafter"/>
</dbReference>
<dbReference type="GO" id="GO:0006220">
    <property type="term" value="P:pyrimidine nucleotide metabolic process"/>
    <property type="evidence" value="ECO:0007669"/>
    <property type="project" value="UniProtKB-UniRule"/>
</dbReference>
<dbReference type="CDD" id="cd02020">
    <property type="entry name" value="CMPK"/>
    <property type="match status" value="1"/>
</dbReference>
<dbReference type="Gene3D" id="3.40.50.300">
    <property type="entry name" value="P-loop containing nucleotide triphosphate hydrolases"/>
    <property type="match status" value="1"/>
</dbReference>
<dbReference type="HAMAP" id="MF_00238">
    <property type="entry name" value="Cytidyl_kinase_type1"/>
    <property type="match status" value="1"/>
</dbReference>
<dbReference type="InterPro" id="IPR003136">
    <property type="entry name" value="Cytidylate_kin"/>
</dbReference>
<dbReference type="InterPro" id="IPR011994">
    <property type="entry name" value="Cytidylate_kinase_dom"/>
</dbReference>
<dbReference type="InterPro" id="IPR027417">
    <property type="entry name" value="P-loop_NTPase"/>
</dbReference>
<dbReference type="NCBIfam" id="TIGR00017">
    <property type="entry name" value="cmk"/>
    <property type="match status" value="1"/>
</dbReference>
<dbReference type="PANTHER" id="PTHR21299:SF2">
    <property type="entry name" value="CYTIDYLATE KINASE"/>
    <property type="match status" value="1"/>
</dbReference>
<dbReference type="PANTHER" id="PTHR21299">
    <property type="entry name" value="CYTIDYLATE KINASE/PANTOATE-BETA-ALANINE LIGASE"/>
    <property type="match status" value="1"/>
</dbReference>
<dbReference type="Pfam" id="PF02224">
    <property type="entry name" value="Cytidylate_kin"/>
    <property type="match status" value="1"/>
</dbReference>
<dbReference type="SUPFAM" id="SSF52540">
    <property type="entry name" value="P-loop containing nucleoside triphosphate hydrolases"/>
    <property type="match status" value="1"/>
</dbReference>
<organism>
    <name type="scientific">Burkholderia thailandensis (strain ATCC 700388 / DSM 13276 / CCUG 48851 / CIP 106301 / E264)</name>
    <dbReference type="NCBI Taxonomy" id="271848"/>
    <lineage>
        <taxon>Bacteria</taxon>
        <taxon>Pseudomonadati</taxon>
        <taxon>Pseudomonadota</taxon>
        <taxon>Betaproteobacteria</taxon>
        <taxon>Burkholderiales</taxon>
        <taxon>Burkholderiaceae</taxon>
        <taxon>Burkholderia</taxon>
        <taxon>pseudomallei group</taxon>
    </lineage>
</organism>
<proteinExistence type="inferred from homology"/>
<sequence>MKSTRPFHPTPVITIDGPTASGKGTVAALVAAHLGFHLLDSGALYRLAALASIRYQVEPNDADALAKLVDGLHITFREGCAQLDGVDVSDEIRAEAVGNRASAIAVHAPVRAALVARQRAFRKTPGLVADGRDMGTVIFPDAVLKVFLTASVEARAARRHKQLMQKGFSANMDNLLQDLRERDARDSNRAAAPLKPAADAKPLDTSALTIEQSVEQVLAWYRELGQPA</sequence>
<keyword id="KW-0067">ATP-binding</keyword>
<keyword id="KW-0963">Cytoplasm</keyword>
<keyword id="KW-0418">Kinase</keyword>
<keyword id="KW-0547">Nucleotide-binding</keyword>
<keyword id="KW-0808">Transferase</keyword>
<gene>
    <name evidence="1" type="primary">cmk</name>
    <name type="ordered locus">BTH_I1637</name>
</gene>
<evidence type="ECO:0000255" key="1">
    <source>
        <dbReference type="HAMAP-Rule" id="MF_00238"/>
    </source>
</evidence>
<name>KCY_BURTA</name>
<accession>Q2SY25</accession>
<protein>
    <recommendedName>
        <fullName evidence="1">Cytidylate kinase</fullName>
        <shortName evidence="1">CK</shortName>
        <ecNumber evidence="1">2.7.4.25</ecNumber>
    </recommendedName>
    <alternativeName>
        <fullName evidence="1">Cytidine monophosphate kinase</fullName>
        <shortName evidence="1">CMP kinase</shortName>
    </alternativeName>
</protein>
<comment type="catalytic activity">
    <reaction evidence="1">
        <text>CMP + ATP = CDP + ADP</text>
        <dbReference type="Rhea" id="RHEA:11600"/>
        <dbReference type="ChEBI" id="CHEBI:30616"/>
        <dbReference type="ChEBI" id="CHEBI:58069"/>
        <dbReference type="ChEBI" id="CHEBI:60377"/>
        <dbReference type="ChEBI" id="CHEBI:456216"/>
        <dbReference type="EC" id="2.7.4.25"/>
    </reaction>
</comment>
<comment type="catalytic activity">
    <reaction evidence="1">
        <text>dCMP + ATP = dCDP + ADP</text>
        <dbReference type="Rhea" id="RHEA:25094"/>
        <dbReference type="ChEBI" id="CHEBI:30616"/>
        <dbReference type="ChEBI" id="CHEBI:57566"/>
        <dbReference type="ChEBI" id="CHEBI:58593"/>
        <dbReference type="ChEBI" id="CHEBI:456216"/>
        <dbReference type="EC" id="2.7.4.25"/>
    </reaction>
</comment>
<comment type="subcellular location">
    <subcellularLocation>
        <location evidence="1">Cytoplasm</location>
    </subcellularLocation>
</comment>
<comment type="similarity">
    <text evidence="1">Belongs to the cytidylate kinase family. Type 1 subfamily.</text>
</comment>
<reference key="1">
    <citation type="journal article" date="2005" name="BMC Genomics">
        <title>Bacterial genome adaptation to niches: divergence of the potential virulence genes in three Burkholderia species of different survival strategies.</title>
        <authorList>
            <person name="Kim H.S."/>
            <person name="Schell M.A."/>
            <person name="Yu Y."/>
            <person name="Ulrich R.L."/>
            <person name="Sarria S.H."/>
            <person name="Nierman W.C."/>
            <person name="DeShazer D."/>
        </authorList>
    </citation>
    <scope>NUCLEOTIDE SEQUENCE [LARGE SCALE GENOMIC DNA]</scope>
    <source>
        <strain>ATCC 700388 / DSM 13276 / CCUG 48851 / CIP 106301 / E264</strain>
    </source>
</reference>
<feature type="chain" id="PRO_1000048202" description="Cytidylate kinase">
    <location>
        <begin position="1"/>
        <end position="228"/>
    </location>
</feature>
<feature type="binding site" evidence="1">
    <location>
        <begin position="17"/>
        <end position="25"/>
    </location>
    <ligand>
        <name>ATP</name>
        <dbReference type="ChEBI" id="CHEBI:30616"/>
    </ligand>
</feature>